<protein>
    <recommendedName>
        <fullName>NADH-ubiquinone oxidoreductase chain 4L</fullName>
        <ecNumber>7.1.1.2</ecNumber>
    </recommendedName>
    <alternativeName>
        <fullName>NADH dehydrogenase subunit 4L</fullName>
    </alternativeName>
</protein>
<geneLocation type="mitochondrion"/>
<comment type="function">
    <text evidence="1">Core subunit of the mitochondrial membrane respiratory chain NADH dehydrogenase (Complex I) which catalyzes electron transfer from NADH through the respiratory chain, using ubiquinone as an electron acceptor. Part of the enzyme membrane arm which is embedded in the lipid bilayer and involved in proton translocation.</text>
</comment>
<comment type="catalytic activity">
    <reaction evidence="1">
        <text>a ubiquinone + NADH + 5 H(+)(in) = a ubiquinol + NAD(+) + 4 H(+)(out)</text>
        <dbReference type="Rhea" id="RHEA:29091"/>
        <dbReference type="Rhea" id="RHEA-COMP:9565"/>
        <dbReference type="Rhea" id="RHEA-COMP:9566"/>
        <dbReference type="ChEBI" id="CHEBI:15378"/>
        <dbReference type="ChEBI" id="CHEBI:16389"/>
        <dbReference type="ChEBI" id="CHEBI:17976"/>
        <dbReference type="ChEBI" id="CHEBI:57540"/>
        <dbReference type="ChEBI" id="CHEBI:57945"/>
        <dbReference type="EC" id="7.1.1.2"/>
    </reaction>
    <physiologicalReaction direction="left-to-right" evidence="1">
        <dbReference type="Rhea" id="RHEA:29092"/>
    </physiologicalReaction>
</comment>
<comment type="subunit">
    <text evidence="2">Core subunit of respiratory chain NADH dehydrogenase (Complex I) which is composed of 45 different subunits.</text>
</comment>
<comment type="subcellular location">
    <subcellularLocation>
        <location evidence="2">Mitochondrion inner membrane</location>
        <topology evidence="3">Multi-pass membrane protein</topology>
    </subcellularLocation>
</comment>
<comment type="similarity">
    <text evidence="4">Belongs to the complex I subunit 4L family.</text>
</comment>
<accession>Q2V0A4</accession>
<organism>
    <name type="scientific">Rangifer tarandus</name>
    <name type="common">Reindeer</name>
    <name type="synonym">Cervus tarandus</name>
    <dbReference type="NCBI Taxonomy" id="9870"/>
    <lineage>
        <taxon>Eukaryota</taxon>
        <taxon>Metazoa</taxon>
        <taxon>Chordata</taxon>
        <taxon>Craniata</taxon>
        <taxon>Vertebrata</taxon>
        <taxon>Euteleostomi</taxon>
        <taxon>Mammalia</taxon>
        <taxon>Eutheria</taxon>
        <taxon>Laurasiatheria</taxon>
        <taxon>Artiodactyla</taxon>
        <taxon>Ruminantia</taxon>
        <taxon>Pecora</taxon>
        <taxon>Cervidae</taxon>
        <taxon>Odocoileinae</taxon>
        <taxon>Rangifer</taxon>
    </lineage>
</organism>
<keyword id="KW-0249">Electron transport</keyword>
<keyword id="KW-0472">Membrane</keyword>
<keyword id="KW-0496">Mitochondrion</keyword>
<keyword id="KW-0999">Mitochondrion inner membrane</keyword>
<keyword id="KW-0520">NAD</keyword>
<keyword id="KW-0679">Respiratory chain</keyword>
<keyword id="KW-1278">Translocase</keyword>
<keyword id="KW-0812">Transmembrane</keyword>
<keyword id="KW-1133">Transmembrane helix</keyword>
<keyword id="KW-0813">Transport</keyword>
<keyword id="KW-0830">Ubiquinone</keyword>
<evidence type="ECO:0000250" key="1">
    <source>
        <dbReference type="UniProtKB" id="P03901"/>
    </source>
</evidence>
<evidence type="ECO:0000250" key="2">
    <source>
        <dbReference type="UniProtKB" id="P03902"/>
    </source>
</evidence>
<evidence type="ECO:0000255" key="3"/>
<evidence type="ECO:0000305" key="4"/>
<sequence length="98" mass="10781">MSLVYMNIMTAFMVSLAGLLMYRSHLMSSLLCLEGMMLSLFVMATLTILNSHFTLASMMPIILLVFAACEAALGLSLLVMVSNTYGTDYVQNLNLLQC</sequence>
<reference key="1">
    <citation type="submission" date="2005-12" db="EMBL/GenBank/DDBJ databases">
        <title>The complete nucleotide sequence of mitochondrial genome in the rein deer (Rangifer tarandus) and red deer (Cervus elaphus).</title>
        <authorList>
            <person name="Wada K."/>
            <person name="Nakamura M."/>
            <person name="Nishibori M."/>
            <person name="Yokohama M."/>
        </authorList>
    </citation>
    <scope>NUCLEOTIDE SEQUENCE [GENOMIC DNA]</scope>
    <source>
        <tissue>Liver</tissue>
    </source>
</reference>
<gene>
    <name type="primary">MT-ND4L</name>
    <name type="synonym">MTND4L</name>
    <name type="synonym">NADH4L</name>
    <name type="synonym">ND4L</name>
</gene>
<feature type="chain" id="PRO_0000275115" description="NADH-ubiquinone oxidoreductase chain 4L">
    <location>
        <begin position="1"/>
        <end position="98"/>
    </location>
</feature>
<feature type="transmembrane region" description="Helical" evidence="3">
    <location>
        <begin position="1"/>
        <end position="21"/>
    </location>
</feature>
<feature type="transmembrane region" description="Helical" evidence="3">
    <location>
        <begin position="29"/>
        <end position="49"/>
    </location>
</feature>
<feature type="transmembrane region" description="Helical" evidence="3">
    <location>
        <begin position="61"/>
        <end position="81"/>
    </location>
</feature>
<dbReference type="EC" id="7.1.1.2"/>
<dbReference type="EMBL" id="AB245426">
    <property type="protein sequence ID" value="BAE66695.1"/>
    <property type="molecule type" value="Genomic_DNA"/>
</dbReference>
<dbReference type="RefSeq" id="YP_448941.1">
    <property type="nucleotide sequence ID" value="NC_007703.1"/>
</dbReference>
<dbReference type="SMR" id="Q2V0A4"/>
<dbReference type="GeneID" id="3854440"/>
<dbReference type="CTD" id="4539"/>
<dbReference type="GO" id="GO:0005743">
    <property type="term" value="C:mitochondrial inner membrane"/>
    <property type="evidence" value="ECO:0000250"/>
    <property type="project" value="UniProtKB"/>
</dbReference>
<dbReference type="GO" id="GO:0045271">
    <property type="term" value="C:respiratory chain complex I"/>
    <property type="evidence" value="ECO:0000250"/>
    <property type="project" value="UniProtKB"/>
</dbReference>
<dbReference type="GO" id="GO:0008137">
    <property type="term" value="F:NADH dehydrogenase (ubiquinone) activity"/>
    <property type="evidence" value="ECO:0000250"/>
    <property type="project" value="UniProtKB"/>
</dbReference>
<dbReference type="GO" id="GO:0042773">
    <property type="term" value="P:ATP synthesis coupled electron transport"/>
    <property type="evidence" value="ECO:0007669"/>
    <property type="project" value="InterPro"/>
</dbReference>
<dbReference type="FunFam" id="1.10.287.3510:FF:000002">
    <property type="entry name" value="NADH-ubiquinone oxidoreductase chain 4L"/>
    <property type="match status" value="1"/>
</dbReference>
<dbReference type="Gene3D" id="1.10.287.3510">
    <property type="match status" value="1"/>
</dbReference>
<dbReference type="InterPro" id="IPR001133">
    <property type="entry name" value="NADH_UbQ_OxRdtase_chain4L/K"/>
</dbReference>
<dbReference type="InterPro" id="IPR039428">
    <property type="entry name" value="NUOK/Mnh_C1-like"/>
</dbReference>
<dbReference type="PANTHER" id="PTHR11434:SF0">
    <property type="entry name" value="NADH-UBIQUINONE OXIDOREDUCTASE CHAIN 4L"/>
    <property type="match status" value="1"/>
</dbReference>
<dbReference type="PANTHER" id="PTHR11434">
    <property type="entry name" value="NADH-UBIQUINONE OXIDOREDUCTASE SUBUNIT ND4L"/>
    <property type="match status" value="1"/>
</dbReference>
<dbReference type="Pfam" id="PF00420">
    <property type="entry name" value="Oxidored_q2"/>
    <property type="match status" value="1"/>
</dbReference>
<name>NU4LM_RANTA</name>
<proteinExistence type="inferred from homology"/>